<protein>
    <recommendedName>
        <fullName evidence="1">DNA replication and repair protein RecF</fullName>
    </recommendedName>
</protein>
<comment type="function">
    <text evidence="1">The RecF protein is involved in DNA metabolism; it is required for DNA replication and normal SOS inducibility. RecF binds preferentially to single-stranded, linear DNA. It also seems to bind ATP.</text>
</comment>
<comment type="subcellular location">
    <subcellularLocation>
        <location evidence="1">Cytoplasm</location>
    </subcellularLocation>
</comment>
<comment type="similarity">
    <text evidence="1">Belongs to the RecF family.</text>
</comment>
<reference key="1">
    <citation type="submission" date="2006-01" db="EMBL/GenBank/DDBJ databases">
        <title>Complete sequence of Anaeromyxobacter dehalogenans 2CP-C.</title>
        <authorList>
            <person name="Copeland A."/>
            <person name="Lucas S."/>
            <person name="Lapidus A."/>
            <person name="Barry K."/>
            <person name="Detter J.C."/>
            <person name="Glavina T."/>
            <person name="Hammon N."/>
            <person name="Israni S."/>
            <person name="Pitluck S."/>
            <person name="Brettin T."/>
            <person name="Bruce D."/>
            <person name="Han C."/>
            <person name="Tapia R."/>
            <person name="Gilna P."/>
            <person name="Kiss H."/>
            <person name="Schmutz J."/>
            <person name="Larimer F."/>
            <person name="Land M."/>
            <person name="Kyrpides N."/>
            <person name="Anderson I."/>
            <person name="Sanford R.A."/>
            <person name="Ritalahti K.M."/>
            <person name="Thomas H.S."/>
            <person name="Kirby J.R."/>
            <person name="Zhulin I.B."/>
            <person name="Loeffler F.E."/>
            <person name="Richardson P."/>
        </authorList>
    </citation>
    <scope>NUCLEOTIDE SEQUENCE [LARGE SCALE GENOMIC DNA]</scope>
    <source>
        <strain>2CP-C</strain>
    </source>
</reference>
<evidence type="ECO:0000255" key="1">
    <source>
        <dbReference type="HAMAP-Rule" id="MF_00365"/>
    </source>
</evidence>
<proteinExistence type="inferred from homology"/>
<name>RECF_ANADE</name>
<organism>
    <name type="scientific">Anaeromyxobacter dehalogenans (strain 2CP-C)</name>
    <dbReference type="NCBI Taxonomy" id="290397"/>
    <lineage>
        <taxon>Bacteria</taxon>
        <taxon>Pseudomonadati</taxon>
        <taxon>Myxococcota</taxon>
        <taxon>Myxococcia</taxon>
        <taxon>Myxococcales</taxon>
        <taxon>Cystobacterineae</taxon>
        <taxon>Anaeromyxobacteraceae</taxon>
        <taxon>Anaeromyxobacter</taxon>
    </lineage>
</organism>
<gene>
    <name evidence="1" type="primary">recF</name>
    <name type="ordered locus">Adeh_0003</name>
</gene>
<accession>Q2ILU8</accession>
<sequence>MKLLSLHVQDFRNLAAVELAPSPRATVLLGENGQGKTNLLEAIYFLTTLKPLRAVRLAELVRFGAADAAVAGDFEGPGGVRRVAVQVAAGGRTASLDGKALGSGARLDDYFEGLASVCFSPDDLLLVKAGPDGRRRFLDRAAFNRWPAVLGEAREYVRALRARNAALRSGTAEVEASFREPLVRAGARLLVRRRDLVAELAPRLRAAFAEISGPAAPEADLAYRAAGGVEVGHPEAEVAARLARALETRLERDREKGFTSAGPHMDDLVLALGGKGARLYGSQGQQRALVLALKIAEIENLRAALGRPPLLLLDDVSSELDPAKNRFLLGYLAALPAQAFLTTTDRRLIEPAAGPDTAFYEVRSGVVSPLVS</sequence>
<keyword id="KW-0067">ATP-binding</keyword>
<keyword id="KW-0963">Cytoplasm</keyword>
<keyword id="KW-0227">DNA damage</keyword>
<keyword id="KW-0234">DNA repair</keyword>
<keyword id="KW-0235">DNA replication</keyword>
<keyword id="KW-0238">DNA-binding</keyword>
<keyword id="KW-0547">Nucleotide-binding</keyword>
<keyword id="KW-1185">Reference proteome</keyword>
<keyword id="KW-0742">SOS response</keyword>
<dbReference type="EMBL" id="CP000251">
    <property type="protein sequence ID" value="ABC79781.1"/>
    <property type="molecule type" value="Genomic_DNA"/>
</dbReference>
<dbReference type="RefSeq" id="WP_011419064.1">
    <property type="nucleotide sequence ID" value="NC_007760.1"/>
</dbReference>
<dbReference type="SMR" id="Q2ILU8"/>
<dbReference type="STRING" id="290397.Adeh_0003"/>
<dbReference type="KEGG" id="ade:Adeh_0003"/>
<dbReference type="eggNOG" id="COG1195">
    <property type="taxonomic scope" value="Bacteria"/>
</dbReference>
<dbReference type="HOGENOM" id="CLU_040267_0_1_7"/>
<dbReference type="OrthoDB" id="9803889at2"/>
<dbReference type="Proteomes" id="UP000001935">
    <property type="component" value="Chromosome"/>
</dbReference>
<dbReference type="GO" id="GO:0005737">
    <property type="term" value="C:cytoplasm"/>
    <property type="evidence" value="ECO:0007669"/>
    <property type="project" value="UniProtKB-SubCell"/>
</dbReference>
<dbReference type="GO" id="GO:0005524">
    <property type="term" value="F:ATP binding"/>
    <property type="evidence" value="ECO:0007669"/>
    <property type="project" value="UniProtKB-UniRule"/>
</dbReference>
<dbReference type="GO" id="GO:0003697">
    <property type="term" value="F:single-stranded DNA binding"/>
    <property type="evidence" value="ECO:0007669"/>
    <property type="project" value="UniProtKB-UniRule"/>
</dbReference>
<dbReference type="GO" id="GO:0006260">
    <property type="term" value="P:DNA replication"/>
    <property type="evidence" value="ECO:0007669"/>
    <property type="project" value="UniProtKB-UniRule"/>
</dbReference>
<dbReference type="GO" id="GO:0000731">
    <property type="term" value="P:DNA synthesis involved in DNA repair"/>
    <property type="evidence" value="ECO:0007669"/>
    <property type="project" value="TreeGrafter"/>
</dbReference>
<dbReference type="GO" id="GO:0006302">
    <property type="term" value="P:double-strand break repair"/>
    <property type="evidence" value="ECO:0007669"/>
    <property type="project" value="TreeGrafter"/>
</dbReference>
<dbReference type="GO" id="GO:0009432">
    <property type="term" value="P:SOS response"/>
    <property type="evidence" value="ECO:0007669"/>
    <property type="project" value="UniProtKB-UniRule"/>
</dbReference>
<dbReference type="Gene3D" id="3.40.50.300">
    <property type="entry name" value="P-loop containing nucleotide triphosphate hydrolases"/>
    <property type="match status" value="1"/>
</dbReference>
<dbReference type="Gene3D" id="1.20.1050.90">
    <property type="entry name" value="RecF/RecN/SMC, N-terminal domain"/>
    <property type="match status" value="1"/>
</dbReference>
<dbReference type="HAMAP" id="MF_00365">
    <property type="entry name" value="RecF"/>
    <property type="match status" value="1"/>
</dbReference>
<dbReference type="InterPro" id="IPR001238">
    <property type="entry name" value="DNA-binding_RecF"/>
</dbReference>
<dbReference type="InterPro" id="IPR018078">
    <property type="entry name" value="DNA-binding_RecF_CS"/>
</dbReference>
<dbReference type="InterPro" id="IPR027417">
    <property type="entry name" value="P-loop_NTPase"/>
</dbReference>
<dbReference type="InterPro" id="IPR003395">
    <property type="entry name" value="RecF/RecN/SMC_N"/>
</dbReference>
<dbReference type="InterPro" id="IPR042174">
    <property type="entry name" value="RecF_2"/>
</dbReference>
<dbReference type="NCBIfam" id="TIGR00611">
    <property type="entry name" value="recf"/>
    <property type="match status" value="1"/>
</dbReference>
<dbReference type="PANTHER" id="PTHR32182">
    <property type="entry name" value="DNA REPLICATION AND REPAIR PROTEIN RECF"/>
    <property type="match status" value="1"/>
</dbReference>
<dbReference type="PANTHER" id="PTHR32182:SF0">
    <property type="entry name" value="DNA REPLICATION AND REPAIR PROTEIN RECF"/>
    <property type="match status" value="1"/>
</dbReference>
<dbReference type="Pfam" id="PF02463">
    <property type="entry name" value="SMC_N"/>
    <property type="match status" value="1"/>
</dbReference>
<dbReference type="SUPFAM" id="SSF52540">
    <property type="entry name" value="P-loop containing nucleoside triphosphate hydrolases"/>
    <property type="match status" value="1"/>
</dbReference>
<dbReference type="PROSITE" id="PS00618">
    <property type="entry name" value="RECF_2"/>
    <property type="match status" value="1"/>
</dbReference>
<feature type="chain" id="PRO_0000236105" description="DNA replication and repair protein RecF">
    <location>
        <begin position="1"/>
        <end position="372"/>
    </location>
</feature>
<feature type="binding site" evidence="1">
    <location>
        <begin position="30"/>
        <end position="37"/>
    </location>
    <ligand>
        <name>ATP</name>
        <dbReference type="ChEBI" id="CHEBI:30616"/>
    </ligand>
</feature>